<name>MTNA_LACBS</name>
<sequence length="382" mass="40799">MALISIRTSDDKIEIINQLLLPHVTEFVQIDTIEQAHDAIKTMKIRGAPAIASLAALSFSQYLSRALQASPLPEYFASPEALKNNLEPVLAYLFTARPTAVNLGAATRRLTTTLNQSIAQGKTTRSIAQDLIDEGKAIADEDVGRNKAMSKWGGDWLFDRVKAGGGSAEKGLNVLTVCNTGSLATSGYGTALGLITYLHETGKLEKAYYTQTAPYHQGSRLTALELKTLNIPSVMICDTMVGSLFQHFNIHAVVVGADRIAKNGDTANKIGTYNAAVIAARHNIPFIVVAPISTVDLAVESGLDIPIEQRPPIEACLVRGILYPNDGNSKQAQVMITPSGLDGIYNPSFDVTPAGLITAIVTEKGVAVKGEGENIFDLTPVV</sequence>
<proteinExistence type="inferred from homology"/>
<accession>B0D0U4</accession>
<dbReference type="EC" id="5.3.1.23" evidence="1"/>
<dbReference type="EMBL" id="DS547095">
    <property type="protein sequence ID" value="EDR11522.1"/>
    <property type="molecule type" value="Genomic_DNA"/>
</dbReference>
<dbReference type="RefSeq" id="XP_001877419.1">
    <property type="nucleotide sequence ID" value="XM_001877384.1"/>
</dbReference>
<dbReference type="SMR" id="B0D0U4"/>
<dbReference type="FunCoup" id="B0D0U4">
    <property type="interactions" value="271"/>
</dbReference>
<dbReference type="STRING" id="486041.B0D0U4"/>
<dbReference type="GeneID" id="6073579"/>
<dbReference type="KEGG" id="lbc:LACBIDRAFT_189088"/>
<dbReference type="HOGENOM" id="CLU_016218_1_3_1"/>
<dbReference type="InParanoid" id="B0D0U4"/>
<dbReference type="OrthoDB" id="2461at2759"/>
<dbReference type="UniPathway" id="UPA00904">
    <property type="reaction ID" value="UER00874"/>
</dbReference>
<dbReference type="Proteomes" id="UP000001194">
    <property type="component" value="Unassembled WGS sequence"/>
</dbReference>
<dbReference type="GO" id="GO:0005737">
    <property type="term" value="C:cytoplasm"/>
    <property type="evidence" value="ECO:0007669"/>
    <property type="project" value="UniProtKB-SubCell"/>
</dbReference>
<dbReference type="GO" id="GO:0005634">
    <property type="term" value="C:nucleus"/>
    <property type="evidence" value="ECO:0007669"/>
    <property type="project" value="UniProtKB-SubCell"/>
</dbReference>
<dbReference type="GO" id="GO:0046523">
    <property type="term" value="F:S-methyl-5-thioribose-1-phosphate isomerase activity"/>
    <property type="evidence" value="ECO:0007669"/>
    <property type="project" value="UniProtKB-UniRule"/>
</dbReference>
<dbReference type="GO" id="GO:0019509">
    <property type="term" value="P:L-methionine salvage from methylthioadenosine"/>
    <property type="evidence" value="ECO:0007669"/>
    <property type="project" value="UniProtKB-UniRule"/>
</dbReference>
<dbReference type="FunFam" id="1.20.120.420:FF:000003">
    <property type="entry name" value="Methylthioribose-1-phosphate isomerase"/>
    <property type="match status" value="1"/>
</dbReference>
<dbReference type="FunFam" id="3.40.50.10470:FF:000006">
    <property type="entry name" value="Methylthioribose-1-phosphate isomerase"/>
    <property type="match status" value="1"/>
</dbReference>
<dbReference type="Gene3D" id="1.20.120.420">
    <property type="entry name" value="translation initiation factor eif-2b, domain 1"/>
    <property type="match status" value="1"/>
</dbReference>
<dbReference type="Gene3D" id="3.40.50.10470">
    <property type="entry name" value="Translation initiation factor eif-2b, domain 2"/>
    <property type="match status" value="1"/>
</dbReference>
<dbReference type="HAMAP" id="MF_01678">
    <property type="entry name" value="Salvage_MtnA"/>
    <property type="match status" value="1"/>
</dbReference>
<dbReference type="InterPro" id="IPR000649">
    <property type="entry name" value="IF-2B-related"/>
</dbReference>
<dbReference type="InterPro" id="IPR005251">
    <property type="entry name" value="IF-M1Pi"/>
</dbReference>
<dbReference type="InterPro" id="IPR042529">
    <property type="entry name" value="IF_2B-like_C"/>
</dbReference>
<dbReference type="InterPro" id="IPR011559">
    <property type="entry name" value="Initiation_fac_2B_a/b/d"/>
</dbReference>
<dbReference type="InterPro" id="IPR027363">
    <property type="entry name" value="M1Pi_N"/>
</dbReference>
<dbReference type="InterPro" id="IPR037171">
    <property type="entry name" value="NagB/RpiA_transferase-like"/>
</dbReference>
<dbReference type="NCBIfam" id="TIGR00524">
    <property type="entry name" value="eIF-2B_rel"/>
    <property type="match status" value="1"/>
</dbReference>
<dbReference type="NCBIfam" id="NF004326">
    <property type="entry name" value="PRK05720.1"/>
    <property type="match status" value="1"/>
</dbReference>
<dbReference type="NCBIfam" id="TIGR00512">
    <property type="entry name" value="salvage_mtnA"/>
    <property type="match status" value="1"/>
</dbReference>
<dbReference type="PANTHER" id="PTHR43475">
    <property type="entry name" value="METHYLTHIORIBOSE-1-PHOSPHATE ISOMERASE"/>
    <property type="match status" value="1"/>
</dbReference>
<dbReference type="PANTHER" id="PTHR43475:SF1">
    <property type="entry name" value="METHYLTHIORIBOSE-1-PHOSPHATE ISOMERASE"/>
    <property type="match status" value="1"/>
</dbReference>
<dbReference type="Pfam" id="PF01008">
    <property type="entry name" value="IF-2B"/>
    <property type="match status" value="1"/>
</dbReference>
<dbReference type="SUPFAM" id="SSF100950">
    <property type="entry name" value="NagB/RpiA/CoA transferase-like"/>
    <property type="match status" value="1"/>
</dbReference>
<keyword id="KW-0028">Amino-acid biosynthesis</keyword>
<keyword id="KW-0963">Cytoplasm</keyword>
<keyword id="KW-0413">Isomerase</keyword>
<keyword id="KW-0486">Methionine biosynthesis</keyword>
<keyword id="KW-0539">Nucleus</keyword>
<keyword id="KW-1185">Reference proteome</keyword>
<protein>
    <recommendedName>
        <fullName evidence="1">Methylthioribose-1-phosphate isomerase</fullName>
        <shortName evidence="1">M1Pi</shortName>
        <shortName evidence="1">MTR-1-P isomerase</shortName>
        <ecNumber evidence="1">5.3.1.23</ecNumber>
    </recommendedName>
    <alternativeName>
        <fullName evidence="1">S-methyl-5-thioribose-1-phosphate isomerase</fullName>
    </alternativeName>
    <alternativeName>
        <fullName evidence="1">Translation initiation factor eIF-2B subunit alpha/beta/delta-like protein</fullName>
    </alternativeName>
</protein>
<comment type="function">
    <text evidence="1">Catalyzes the interconversion of methylthioribose-1-phosphate (MTR-1-P) into methylthioribulose-1-phosphate (MTRu-1-P).</text>
</comment>
<comment type="catalytic activity">
    <reaction evidence="1">
        <text>5-(methylsulfanyl)-alpha-D-ribose 1-phosphate = 5-(methylsulfanyl)-D-ribulose 1-phosphate</text>
        <dbReference type="Rhea" id="RHEA:19989"/>
        <dbReference type="ChEBI" id="CHEBI:58533"/>
        <dbReference type="ChEBI" id="CHEBI:58548"/>
        <dbReference type="EC" id="5.3.1.23"/>
    </reaction>
</comment>
<comment type="pathway">
    <text evidence="1">Amino-acid biosynthesis; L-methionine biosynthesis via salvage pathway; L-methionine from S-methyl-5-thio-alpha-D-ribose 1-phosphate: step 1/6.</text>
</comment>
<comment type="subcellular location">
    <subcellularLocation>
        <location evidence="1">Cytoplasm</location>
    </subcellularLocation>
    <subcellularLocation>
        <location evidence="1">Nucleus</location>
    </subcellularLocation>
</comment>
<comment type="similarity">
    <text evidence="1">Belongs to the eIF-2B alpha/beta/delta subunits family. MtnA subfamily.</text>
</comment>
<reference key="1">
    <citation type="journal article" date="2008" name="Nature">
        <title>The genome of Laccaria bicolor provides insights into mycorrhizal symbiosis.</title>
        <authorList>
            <person name="Martin F."/>
            <person name="Aerts A."/>
            <person name="Ahren D."/>
            <person name="Brun A."/>
            <person name="Danchin E.G.J."/>
            <person name="Duchaussoy F."/>
            <person name="Gibon J."/>
            <person name="Kohler A."/>
            <person name="Lindquist E."/>
            <person name="Pereda V."/>
            <person name="Salamov A."/>
            <person name="Shapiro H.J."/>
            <person name="Wuyts J."/>
            <person name="Blaudez D."/>
            <person name="Buee M."/>
            <person name="Brokstein P."/>
            <person name="Canbaeck B."/>
            <person name="Cohen D."/>
            <person name="Courty P.E."/>
            <person name="Coutinho P.M."/>
            <person name="Delaruelle C."/>
            <person name="Detter J.C."/>
            <person name="Deveau A."/>
            <person name="DiFazio S."/>
            <person name="Duplessis S."/>
            <person name="Fraissinet-Tachet L."/>
            <person name="Lucic E."/>
            <person name="Frey-Klett P."/>
            <person name="Fourrey C."/>
            <person name="Feussner I."/>
            <person name="Gay G."/>
            <person name="Grimwood J."/>
            <person name="Hoegger P.J."/>
            <person name="Jain P."/>
            <person name="Kilaru S."/>
            <person name="Labbe J."/>
            <person name="Lin Y.C."/>
            <person name="Legue V."/>
            <person name="Le Tacon F."/>
            <person name="Marmeisse R."/>
            <person name="Melayah D."/>
            <person name="Montanini B."/>
            <person name="Muratet M."/>
            <person name="Nehls U."/>
            <person name="Niculita-Hirzel H."/>
            <person name="Oudot-Le Secq M.P."/>
            <person name="Peter M."/>
            <person name="Quesneville H."/>
            <person name="Rajashekar B."/>
            <person name="Reich M."/>
            <person name="Rouhier N."/>
            <person name="Schmutz J."/>
            <person name="Yin T."/>
            <person name="Chalot M."/>
            <person name="Henrissat B."/>
            <person name="Kuees U."/>
            <person name="Lucas S."/>
            <person name="Van de Peer Y."/>
            <person name="Podila G.K."/>
            <person name="Polle A."/>
            <person name="Pukkila P.J."/>
            <person name="Richardson P.M."/>
            <person name="Rouze P."/>
            <person name="Sanders I.R."/>
            <person name="Stajich J.E."/>
            <person name="Tunlid A."/>
            <person name="Tuskan G."/>
            <person name="Grigoriev I.V."/>
        </authorList>
    </citation>
    <scope>NUCLEOTIDE SEQUENCE [LARGE SCALE GENOMIC DNA]</scope>
    <source>
        <strain>S238N-H82 / ATCC MYA-4686</strain>
    </source>
</reference>
<feature type="chain" id="PRO_0000402030" description="Methylthioribose-1-phosphate isomerase">
    <location>
        <begin position="1"/>
        <end position="382"/>
    </location>
</feature>
<feature type="active site" description="Proton donor" evidence="1">
    <location>
        <position position="258"/>
    </location>
</feature>
<feature type="site" description="Transition state stabilizer" evidence="1">
    <location>
        <position position="178"/>
    </location>
</feature>
<evidence type="ECO:0000255" key="1">
    <source>
        <dbReference type="HAMAP-Rule" id="MF_03119"/>
    </source>
</evidence>
<gene>
    <name evidence="1" type="primary">MRI1</name>
    <name type="ORF">LACBIDRAFT_189088</name>
</gene>
<organism>
    <name type="scientific">Laccaria bicolor (strain S238N-H82 / ATCC MYA-4686)</name>
    <name type="common">Bicoloured deceiver</name>
    <name type="synonym">Laccaria laccata var. bicolor</name>
    <dbReference type="NCBI Taxonomy" id="486041"/>
    <lineage>
        <taxon>Eukaryota</taxon>
        <taxon>Fungi</taxon>
        <taxon>Dikarya</taxon>
        <taxon>Basidiomycota</taxon>
        <taxon>Agaricomycotina</taxon>
        <taxon>Agaricomycetes</taxon>
        <taxon>Agaricomycetidae</taxon>
        <taxon>Agaricales</taxon>
        <taxon>Agaricineae</taxon>
        <taxon>Hydnangiaceae</taxon>
        <taxon>Laccaria</taxon>
    </lineage>
</organism>